<reference key="1">
    <citation type="journal article" date="2011" name="Genome Biol.">
        <title>Comparative and functional genomics provide insights into the pathogenicity of dermatophytic fungi.</title>
        <authorList>
            <person name="Burmester A."/>
            <person name="Shelest E."/>
            <person name="Gloeckner G."/>
            <person name="Heddergott C."/>
            <person name="Schindler S."/>
            <person name="Staib P."/>
            <person name="Heidel A."/>
            <person name="Felder M."/>
            <person name="Petzold A."/>
            <person name="Szafranski K."/>
            <person name="Feuermann M."/>
            <person name="Pedruzzi I."/>
            <person name="Priebe S."/>
            <person name="Groth M."/>
            <person name="Winkler R."/>
            <person name="Li W."/>
            <person name="Kniemeyer O."/>
            <person name="Schroeckh V."/>
            <person name="Hertweck C."/>
            <person name="Hube B."/>
            <person name="White T.C."/>
            <person name="Platzer M."/>
            <person name="Guthke R."/>
            <person name="Heitman J."/>
            <person name="Woestemeyer J."/>
            <person name="Zipfel P.F."/>
            <person name="Monod M."/>
            <person name="Brakhage A.A."/>
        </authorList>
    </citation>
    <scope>NUCLEOTIDE SEQUENCE [LARGE SCALE GENOMIC DNA]</scope>
    <source>
        <strain>ATCC MYA-4681 / CBS 112371</strain>
    </source>
</reference>
<reference key="2">
    <citation type="journal article" date="2016" name="PLoS ONE">
        <title>HapX mediates iron homeostasis in the pathogenic dermatophyte Arthroderma benhamiae but is dispensable for virulence.</title>
        <authorList>
            <person name="Kroeber A."/>
            <person name="Scherlach K."/>
            <person name="Hortschansky P."/>
            <person name="Shelest E."/>
            <person name="Staib P."/>
            <person name="Kniemeyer O."/>
            <person name="Brakhage A.A."/>
        </authorList>
    </citation>
    <scope>FUNCTION</scope>
    <scope>DISRUPTION PHENOTYPE</scope>
    <scope>INDUCTION</scope>
</reference>
<name>HAPX_ARTBC</name>
<dbReference type="EMBL" id="ABSU01000006">
    <property type="protein sequence ID" value="EFE34411.1"/>
    <property type="molecule type" value="Genomic_DNA"/>
</dbReference>
<dbReference type="RefSeq" id="XP_003015051.1">
    <property type="nucleotide sequence ID" value="XM_003015005.1"/>
</dbReference>
<dbReference type="SMR" id="D4AQY2"/>
<dbReference type="STRING" id="663331.D4AQY2"/>
<dbReference type="GeneID" id="9520774"/>
<dbReference type="KEGG" id="abe:ARB_06811"/>
<dbReference type="eggNOG" id="ENOG502QUE5">
    <property type="taxonomic scope" value="Eukaryota"/>
</dbReference>
<dbReference type="HOGENOM" id="CLU_014054_0_0_1"/>
<dbReference type="OMA" id="MEIDFTA"/>
<dbReference type="OrthoDB" id="5374328at2759"/>
<dbReference type="Proteomes" id="UP000008866">
    <property type="component" value="Unassembled WGS sequence"/>
</dbReference>
<dbReference type="GO" id="GO:0090575">
    <property type="term" value="C:RNA polymerase II transcription regulator complex"/>
    <property type="evidence" value="ECO:0007669"/>
    <property type="project" value="TreeGrafter"/>
</dbReference>
<dbReference type="GO" id="GO:0001228">
    <property type="term" value="F:DNA-binding transcription activator activity, RNA polymerase II-specific"/>
    <property type="evidence" value="ECO:0007669"/>
    <property type="project" value="TreeGrafter"/>
</dbReference>
<dbReference type="GO" id="GO:0000976">
    <property type="term" value="F:transcription cis-regulatory region binding"/>
    <property type="evidence" value="ECO:0007669"/>
    <property type="project" value="InterPro"/>
</dbReference>
<dbReference type="Gene3D" id="1.20.5.170">
    <property type="match status" value="1"/>
</dbReference>
<dbReference type="InterPro" id="IPR050936">
    <property type="entry name" value="AP-1-like"/>
</dbReference>
<dbReference type="InterPro" id="IPR004827">
    <property type="entry name" value="bZIP"/>
</dbReference>
<dbReference type="InterPro" id="IPR046347">
    <property type="entry name" value="bZIP_sf"/>
</dbReference>
<dbReference type="InterPro" id="IPR018287">
    <property type="entry name" value="Hap4_TF_heteromerisation"/>
</dbReference>
<dbReference type="PANTHER" id="PTHR40621:SF7">
    <property type="entry name" value="BZIP DOMAIN-CONTAINING PROTEIN"/>
    <property type="match status" value="1"/>
</dbReference>
<dbReference type="PANTHER" id="PTHR40621">
    <property type="entry name" value="TRANSCRIPTION FACTOR KAPC-RELATED"/>
    <property type="match status" value="1"/>
</dbReference>
<dbReference type="Pfam" id="PF00170">
    <property type="entry name" value="bZIP_1"/>
    <property type="match status" value="1"/>
</dbReference>
<dbReference type="Pfam" id="PF10297">
    <property type="entry name" value="Hap4_Hap_bind"/>
    <property type="match status" value="1"/>
</dbReference>
<dbReference type="SMART" id="SM00338">
    <property type="entry name" value="BRLZ"/>
    <property type="match status" value="1"/>
</dbReference>
<dbReference type="SUPFAM" id="SSF57959">
    <property type="entry name" value="Leucine zipper domain"/>
    <property type="match status" value="1"/>
</dbReference>
<dbReference type="PROSITE" id="PS50217">
    <property type="entry name" value="BZIP"/>
    <property type="match status" value="1"/>
</dbReference>
<dbReference type="PROSITE" id="PS00036">
    <property type="entry name" value="BZIP_BASIC"/>
    <property type="match status" value="1"/>
</dbReference>
<feature type="chain" id="PRO_0000444415" description="bZIP transcription factor hapX">
    <location>
        <begin position="1"/>
        <end position="474"/>
    </location>
</feature>
<feature type="domain" description="bZIP" evidence="1">
    <location>
        <begin position="67"/>
        <end position="108"/>
    </location>
</feature>
<feature type="region of interest" description="Disordered" evidence="2">
    <location>
        <begin position="1"/>
        <end position="82"/>
    </location>
</feature>
<feature type="region of interest" description="Basic motif" evidence="1">
    <location>
        <begin position="72"/>
        <end position="91"/>
    </location>
</feature>
<feature type="region of interest" description="Leucine-zipper" evidence="1">
    <location>
        <begin position="95"/>
        <end position="102"/>
    </location>
</feature>
<feature type="region of interest" description="Disordered" evidence="2">
    <location>
        <begin position="201"/>
        <end position="242"/>
    </location>
</feature>
<feature type="region of interest" description="Disordered" evidence="2">
    <location>
        <begin position="282"/>
        <end position="317"/>
    </location>
</feature>
<feature type="region of interest" description="Disordered" evidence="2">
    <location>
        <begin position="429"/>
        <end position="449"/>
    </location>
</feature>
<feature type="compositionally biased region" description="Polar residues" evidence="2">
    <location>
        <begin position="1"/>
        <end position="10"/>
    </location>
</feature>
<feature type="compositionally biased region" description="Polar residues" evidence="2">
    <location>
        <begin position="287"/>
        <end position="307"/>
    </location>
</feature>
<protein>
    <recommendedName>
        <fullName evidence="4">bZIP transcription factor hapX</fullName>
    </recommendedName>
    <alternativeName>
        <fullName evidence="4">Iron acquisition regulator hapX</fullName>
    </alternativeName>
</protein>
<organism>
    <name type="scientific">Arthroderma benhamiae (strain ATCC MYA-4681 / CBS 112371)</name>
    <name type="common">Trichophyton mentagrophytes</name>
    <dbReference type="NCBI Taxonomy" id="663331"/>
    <lineage>
        <taxon>Eukaryota</taxon>
        <taxon>Fungi</taxon>
        <taxon>Dikarya</taxon>
        <taxon>Ascomycota</taxon>
        <taxon>Pezizomycotina</taxon>
        <taxon>Eurotiomycetes</taxon>
        <taxon>Eurotiomycetidae</taxon>
        <taxon>Onygenales</taxon>
        <taxon>Arthrodermataceae</taxon>
        <taxon>Trichophyton</taxon>
    </lineage>
</organism>
<sequence length="474" mass="51706">MSTSAGTPTSAHAPLSIAPASTPHQRSLSVKPLAAAPSPAPVTQCSITSKEWIVPPRPKPGRKPATDTPPTKRKAQNRAAQRAFRERRAARVGELEEQIKKIEEENEREEAALKKTIQQQQQQIEEYKSQLLWWKNRCKAVEDELMTEKVAKEDAIKQLERINNSGRTTNNGNSVIGGCERCSSTRCQCIDDAFNIANITQMQTDDPHSKRGRSPSQGATQKRHRSNPEIKTEPEDLETDFTHSFSLRRHSRTGNDATTPILLDPCGFCQDGSPCICAEMAEDQPSDRSNQPSQLTKLPPIQNISQFTPPPSEGDVLSKSATLVSSNKSNPCANGPGTCAQCLADPRSSVFCKSLAASRASTRQEGGCCGGGGGKDGCCKNRSSGSDSSKQATSPITLSCADTFTTLSLHPKFASASNELSNWIPQLHTLPNPQNLNPDRRRDQNLTNRPALEVEAASVMGVLRYFDRRFADSK</sequence>
<gene>
    <name evidence="4" type="primary">hapX</name>
    <name type="ORF">ARB_06811</name>
</gene>
<accession>D4AQY2</accession>
<proteinExistence type="evidence at transcript level"/>
<keyword id="KW-0539">Nucleus</keyword>
<keyword id="KW-1185">Reference proteome</keyword>
<evidence type="ECO:0000255" key="1">
    <source>
        <dbReference type="PROSITE-ProRule" id="PRU00978"/>
    </source>
</evidence>
<evidence type="ECO:0000256" key="2">
    <source>
        <dbReference type="SAM" id="MobiDB-lite"/>
    </source>
</evidence>
<evidence type="ECO:0000269" key="3">
    <source>
    </source>
</evidence>
<evidence type="ECO:0000303" key="4">
    <source>
    </source>
</evidence>
<evidence type="ECO:0000305" key="5"/>
<comment type="function">
    <text evidence="3">Iron regulator crucial for the adaptation to iron starvation and iron excess, but is dispensable for virulence (PubMed:26960149). SreA represses the expression of hapX and the siderophore system during iron sufficient conditions by an iron-sensing mechanism, while hapX represses sreA and activates the siderophore system during iron-limiting conditions, resulting in efficient iron uptake and inhibition of iron-consuming pathways (PubMed:26960149). HapX targets include genes encoding a number of key iron-regulated factors such as the vacuolar iron importer cccA, as well as hemA, cycA and lysF involved in heme biosynthesis, respiration and lysine biosynthesis, respectively (PubMed:26960149). Activation of the vacuolar iron importer cccA during high iron conditions is essential for iron detoxification (PubMed:26960149).</text>
</comment>
<comment type="subcellular location">
    <subcellularLocation>
        <location evidence="1">Nucleus</location>
    </subcellularLocation>
</comment>
<comment type="induction">
    <text evidence="3">Expression is highly up-regulated during iron starvation (PubMed:26960149).</text>
</comment>
<comment type="disruption phenotype">
    <text evidence="3">Leads to reduced growth and decreased conidiation during iron starvation, but not during iron-replete conditions (PubMed:26960149). Showed a reddish pigmentation of mycelia during iron-depleted conditions probably due to the accumulation of iron-free precursors of heme (PubMed:26960149). Results in a lacking activation of the siderophore biosynthesis genes sidA and sidC during iron starvation and in a decreased production of extracellular ferrichrome C, but not ferricrocin (PubMed:26960149). Also results in complete deregulation of genes from iron-dependent pathways such as vacuolar iron storage, amino acid metabolism, respiration and heme biosynthesis during iron limitation (PubMed:26960149).</text>
</comment>
<comment type="similarity">
    <text evidence="5">Belongs to the bZIP family. YAP subfamily.</text>
</comment>